<proteinExistence type="inferred from homology"/>
<reference key="1">
    <citation type="journal article" date="2004" name="Nature">
        <title>Genesis of a highly pathogenic and potentially pandemic H5N1 influenza virus in eastern Asia.</title>
        <authorList>
            <person name="Li K.S."/>
            <person name="Guan Y."/>
            <person name="Wang J."/>
            <person name="Smith G.J.D."/>
            <person name="Xu K.M."/>
            <person name="Duan L."/>
            <person name="Rahardjo A.P."/>
            <person name="Puthavathana P."/>
            <person name="Buranathai C."/>
            <person name="Nguyen T.D."/>
            <person name="Estoepangestie A.T.S."/>
            <person name="Chaisingh A."/>
            <person name="Auewarakul P."/>
            <person name="Long H.T."/>
            <person name="Hanh N.T.H."/>
            <person name="Webby R.J."/>
            <person name="Poon L.L.M."/>
            <person name="Chen H."/>
            <person name="Shortridge K.F."/>
            <person name="Yuen K.Y."/>
            <person name="Webster R.G."/>
            <person name="Peiris J.S.M."/>
        </authorList>
    </citation>
    <scope>NUCLEOTIDE SEQUENCE [GENOMIC RNA]</scope>
</reference>
<keyword id="KW-0025">Alternative splicing</keyword>
<keyword id="KW-1262">Eukaryotic host gene expression shutoff by virus</keyword>
<keyword id="KW-1035">Host cytoplasm</keyword>
<keyword id="KW-1190">Host gene expression shutoff by virus</keyword>
<keyword id="KW-1192">Host mRNA suppression by virus</keyword>
<keyword id="KW-1048">Host nucleus</keyword>
<keyword id="KW-0945">Host-virus interaction</keyword>
<keyword id="KW-1090">Inhibition of host innate immune response by virus</keyword>
<keyword id="KW-1114">Inhibition of host interferon signaling pathway by virus</keyword>
<keyword id="KW-1102">Inhibition of host PKR by virus</keyword>
<keyword id="KW-1103">Inhibition of host pre-mRNA processing by virus</keyword>
<keyword id="KW-1088">Inhibition of host RIG-I by virus</keyword>
<keyword id="KW-1113">Inhibition of host RLR pathway by virus</keyword>
<keyword id="KW-0922">Interferon antiviral system evasion</keyword>
<keyword id="KW-0694">RNA-binding</keyword>
<keyword id="KW-0832">Ubl conjugation</keyword>
<keyword id="KW-0899">Viral immunoevasion</keyword>
<dbReference type="EMBL" id="AY651565">
    <property type="protein sequence ID" value="AAT73419.1"/>
    <property type="molecule type" value="Genomic_RNA"/>
</dbReference>
<dbReference type="SMR" id="Q6DP68"/>
<dbReference type="GO" id="GO:0030430">
    <property type="term" value="C:host cell cytoplasm"/>
    <property type="evidence" value="ECO:0007669"/>
    <property type="project" value="UniProtKB-SubCell"/>
</dbReference>
<dbReference type="GO" id="GO:0042025">
    <property type="term" value="C:host cell nucleus"/>
    <property type="evidence" value="ECO:0007669"/>
    <property type="project" value="UniProtKB-SubCell"/>
</dbReference>
<dbReference type="GO" id="GO:0030291">
    <property type="term" value="F:protein serine/threonine kinase inhibitor activity"/>
    <property type="evidence" value="ECO:0007669"/>
    <property type="project" value="UniProtKB-KW"/>
</dbReference>
<dbReference type="GO" id="GO:0003723">
    <property type="term" value="F:RNA binding"/>
    <property type="evidence" value="ECO:0007669"/>
    <property type="project" value="UniProtKB-KW"/>
</dbReference>
<dbReference type="GO" id="GO:0039540">
    <property type="term" value="P:symbiont-mediated suppression of host cytoplasmic pattern recognition receptor signaling pathway via inhibition of RIG-I activity"/>
    <property type="evidence" value="ECO:0007669"/>
    <property type="project" value="UniProtKB-KW"/>
</dbReference>
<dbReference type="GO" id="GO:0039657">
    <property type="term" value="P:symbiont-mediated suppression of host gene expression"/>
    <property type="evidence" value="ECO:0007669"/>
    <property type="project" value="UniProtKB-KW"/>
</dbReference>
<dbReference type="GO" id="GO:0039524">
    <property type="term" value="P:symbiont-mediated suppression of host mRNA processing"/>
    <property type="evidence" value="ECO:0007669"/>
    <property type="project" value="UniProtKB-KW"/>
</dbReference>
<dbReference type="GO" id="GO:0039580">
    <property type="term" value="P:symbiont-mediated suppression of host PKR/eIFalpha signaling"/>
    <property type="evidence" value="ECO:0007669"/>
    <property type="project" value="UniProtKB-KW"/>
</dbReference>
<dbReference type="GO" id="GO:0039502">
    <property type="term" value="P:symbiont-mediated suppression of host type I interferon-mediated signaling pathway"/>
    <property type="evidence" value="ECO:0007669"/>
    <property type="project" value="UniProtKB-KW"/>
</dbReference>
<dbReference type="FunFam" id="1.10.287.10:FF:000001">
    <property type="entry name" value="Non-structural protein 1"/>
    <property type="match status" value="1"/>
</dbReference>
<dbReference type="FunFam" id="3.30.420.330:FF:000001">
    <property type="entry name" value="Non-structural protein 1"/>
    <property type="match status" value="1"/>
</dbReference>
<dbReference type="Gene3D" id="3.30.420.330">
    <property type="entry name" value="Influenza virus non-structural protein, effector domain"/>
    <property type="match status" value="1"/>
</dbReference>
<dbReference type="Gene3D" id="1.10.287.10">
    <property type="entry name" value="S15/NS1, RNA-binding"/>
    <property type="match status" value="1"/>
</dbReference>
<dbReference type="HAMAP" id="MF_04066">
    <property type="entry name" value="INFV_NS1"/>
    <property type="match status" value="1"/>
</dbReference>
<dbReference type="InterPro" id="IPR004208">
    <property type="entry name" value="NS1"/>
</dbReference>
<dbReference type="InterPro" id="IPR000256">
    <property type="entry name" value="NS1A"/>
</dbReference>
<dbReference type="InterPro" id="IPR038064">
    <property type="entry name" value="NS1A_effect_dom-like_sf"/>
</dbReference>
<dbReference type="InterPro" id="IPR009068">
    <property type="entry name" value="uS15_NS1_RNA-bd_sf"/>
</dbReference>
<dbReference type="Pfam" id="PF00600">
    <property type="entry name" value="Flu_NS1"/>
    <property type="match status" value="1"/>
</dbReference>
<dbReference type="SUPFAM" id="SSF143021">
    <property type="entry name" value="Ns1 effector domain-like"/>
    <property type="match status" value="1"/>
</dbReference>
<dbReference type="SUPFAM" id="SSF47060">
    <property type="entry name" value="S15/NS1 RNA-binding domain"/>
    <property type="match status" value="1"/>
</dbReference>
<sequence>MDSNTVSSFQVDCFLWHVRKRFADQELGDAPFLDRLRRDQKSLRGRGSTLGLDIETATRAGKQIVERILEKESDEALKMTIASLSALRYLTDMTLEEMSRDWFMLMPKQKVAGSLCIRMDQAIMDKTIILKANFSVIFDRLETLILLRAFTEEGAIVGEISPLPSLPGHTDEDVKNAIGVLIGGLEWNDNTVRVSETLQRFAWRSSNEGGRPSLPPKQKRKMARTTESEV</sequence>
<accession>Q6DP68</accession>
<organism>
    <name type="scientific">Influenza A virus (strain A/Chicken/Hong Kong/31.2/2002 H5N1 genotype X1)</name>
    <dbReference type="NCBI Taxonomy" id="284169"/>
    <lineage>
        <taxon>Viruses</taxon>
        <taxon>Riboviria</taxon>
        <taxon>Orthornavirae</taxon>
        <taxon>Negarnaviricota</taxon>
        <taxon>Polyploviricotina</taxon>
        <taxon>Insthoviricetes</taxon>
        <taxon>Articulavirales</taxon>
        <taxon>Orthomyxoviridae</taxon>
        <taxon>Alphainfluenzavirus</taxon>
        <taxon>Alphainfluenzavirus influenzae</taxon>
        <taxon>Influenza A virus</taxon>
    </lineage>
</organism>
<protein>
    <recommendedName>
        <fullName evidence="1">Non-structural protein 1</fullName>
        <shortName evidence="1">NS1</shortName>
    </recommendedName>
    <alternativeName>
        <fullName evidence="1">NS1A</fullName>
    </alternativeName>
</protein>
<feature type="chain" id="PRO_0000311748" description="Non-structural protein 1">
    <location>
        <begin position="1"/>
        <end position="230"/>
    </location>
</feature>
<feature type="region of interest" description="RNA-binding and homodimerization" evidence="1">
    <location>
        <begin position="1"/>
        <end position="73"/>
    </location>
</feature>
<feature type="region of interest" description="CPSF4-binding" evidence="1">
    <location>
        <begin position="180"/>
        <end position="215"/>
    </location>
</feature>
<feature type="region of interest" description="Disordered" evidence="2">
    <location>
        <begin position="205"/>
        <end position="230"/>
    </location>
</feature>
<feature type="region of interest" description="PABPN1-binding" evidence="1">
    <location>
        <begin position="223"/>
        <end position="230"/>
    </location>
</feature>
<feature type="short sequence motif" description="Nuclear localization signal" evidence="1">
    <location>
        <begin position="34"/>
        <end position="38"/>
    </location>
</feature>
<feature type="short sequence motif" description="Nuclear export signal" evidence="1">
    <location>
        <begin position="137"/>
        <end position="146"/>
    </location>
</feature>
<organismHost>
    <name type="scientific">Aves</name>
    <dbReference type="NCBI Taxonomy" id="8782"/>
</organismHost>
<organismHost>
    <name type="scientific">Felis catus</name>
    <name type="common">Cat</name>
    <name type="synonym">Felis silvestris catus</name>
    <dbReference type="NCBI Taxonomy" id="9685"/>
</organismHost>
<organismHost>
    <name type="scientific">Homo sapiens</name>
    <name type="common">Human</name>
    <dbReference type="NCBI Taxonomy" id="9606"/>
</organismHost>
<organismHost>
    <name type="scientific">Panthera pardus</name>
    <name type="common">Leopard</name>
    <name type="synonym">Felis pardus</name>
    <dbReference type="NCBI Taxonomy" id="9691"/>
</organismHost>
<organismHost>
    <name type="scientific">Panthera tigris</name>
    <name type="common">Tiger</name>
    <dbReference type="NCBI Taxonomy" id="9694"/>
</organismHost>
<organismHost>
    <name type="scientific">Sus scrofa</name>
    <name type="common">Pig</name>
    <dbReference type="NCBI Taxonomy" id="9823"/>
</organismHost>
<name>NS1_I02A2</name>
<evidence type="ECO:0000255" key="1">
    <source>
        <dbReference type="HAMAP-Rule" id="MF_04066"/>
    </source>
</evidence>
<evidence type="ECO:0000256" key="2">
    <source>
        <dbReference type="SAM" id="MobiDB-lite"/>
    </source>
</evidence>
<gene>
    <name evidence="1" type="primary">NS</name>
</gene>
<comment type="function">
    <text evidence="1">Inhibits post-transcriptional processing of cellular pre-mRNA, by binding and inhibiting two cellular proteins that are required for the 3'-end processing of cellular pre-mRNAs: the 30 kDa cleavage and polyadenylation specificity factor/CPSF4 and the poly(A)-binding protein 2/PABPN1. In turn, unprocessed 3' end pre-mRNAs accumulate in the host nucleus and are no longer exported to the cytoplasm. Cellular protein synthesis is thereby shut off very early after virus infection. Viral protein synthesis is not affected by the inhibition of the cellular 3' end processing machinery because the poly(A) tails of viral mRNAs are produced by the viral polymerase through a stuttering mechanism. Prevents the establishment of the cellular antiviral state by inhibiting TRIM25-mediated RIGI ubiquitination, which normally triggers the antiviral transduction signal that leads to the activation of type I IFN genes by transcription factors IRF3 and IRF7. Also binds poly(A) and U6 snRNA. Inhibits the integrated stress response (ISR) in the infected cell by blocking dsRNA binding by EIF2AK2/PKR and further phosphorylation of EIF2S1/EIF-2ALPHA. Stress granule formation is thus inhibited, which allows protein synthesis and viral replication.</text>
</comment>
<comment type="subunit">
    <text evidence="1">Homodimer. Interacts with host TRIM25 (via coiled coil); this interaction specifically inhibits TRIM25 multimerization and TRIM25-mediated RIGI CARD ubiquitination. Interacts with human EIF2AK2/PKR, CPSF4, IVNS1ABP and PABPN1.</text>
</comment>
<comment type="subcellular location">
    <subcellularLocation>
        <location evidence="1">Host nucleus</location>
    </subcellularLocation>
    <subcellularLocation>
        <location evidence="1">Host cytoplasm</location>
    </subcellularLocation>
    <text evidence="1">In uninfected, transfected cells, NS1 is localized in the nucleus. Only in virus infected cells, the nuclear export signal is unveiled, presumably by a viral protein, and a fraction of NS1 is exported in the cytoplasm.</text>
</comment>
<comment type="alternative products">
    <event type="alternative splicing"/>
    <isoform>
        <id>Q6DP68-1</id>
        <name>NS1</name>
        <sequence type="displayed"/>
    </isoform>
    <isoform>
        <id>Q6DP69-1</id>
        <name>NEP</name>
        <name>NS2</name>
        <sequence type="external"/>
    </isoform>
</comment>
<comment type="domain">
    <text evidence="1">The dsRNA-binding region is required for suppression of RNA silencing.</text>
</comment>
<comment type="PTM">
    <text evidence="1">Upon interferon induction, ISGylated via host HERC5; this results in the impairment of NS1 interaction with RNA targets due to its inability to form homodimers and to interact with host EIF2AK2/PKR.</text>
</comment>
<comment type="similarity">
    <text evidence="1">Belongs to the influenza A viruses NS1 family.</text>
</comment>